<evidence type="ECO:0000255" key="1">
    <source>
        <dbReference type="HAMAP-Rule" id="MF_00031"/>
    </source>
</evidence>
<sequence>MIGRIQGTLVSVHPPRLLVDCQGVGYEIDVPMSTLYQLPEVNQKITLLTHFQVREDAQQLFGFATEIEREAFRQLIKISGVGSRTALAVLSGMSVNELAQAIALQEAGRLTQVPGIGKKTAERLCLELKGKLAPDLGITGGKPQAIEATSEVLQALLSLGYSEKEALLALKQIPPETSVSDGIRMGLKYLSKP</sequence>
<gene>
    <name evidence="1" type="primary">ruvA</name>
    <name type="ordered locus">Pnuc_1879</name>
</gene>
<dbReference type="EMBL" id="CP000655">
    <property type="protein sequence ID" value="ABP35091.1"/>
    <property type="molecule type" value="Genomic_DNA"/>
</dbReference>
<dbReference type="RefSeq" id="WP_011903714.1">
    <property type="nucleotide sequence ID" value="NC_009379.1"/>
</dbReference>
<dbReference type="SMR" id="A4T027"/>
<dbReference type="GeneID" id="31482269"/>
<dbReference type="KEGG" id="pnu:Pnuc_1879"/>
<dbReference type="eggNOG" id="COG0632">
    <property type="taxonomic scope" value="Bacteria"/>
</dbReference>
<dbReference type="HOGENOM" id="CLU_087936_0_0_4"/>
<dbReference type="Proteomes" id="UP000000231">
    <property type="component" value="Chromosome"/>
</dbReference>
<dbReference type="GO" id="GO:0005737">
    <property type="term" value="C:cytoplasm"/>
    <property type="evidence" value="ECO:0007669"/>
    <property type="project" value="UniProtKB-SubCell"/>
</dbReference>
<dbReference type="GO" id="GO:0009379">
    <property type="term" value="C:Holliday junction helicase complex"/>
    <property type="evidence" value="ECO:0007669"/>
    <property type="project" value="InterPro"/>
</dbReference>
<dbReference type="GO" id="GO:0048476">
    <property type="term" value="C:Holliday junction resolvase complex"/>
    <property type="evidence" value="ECO:0007669"/>
    <property type="project" value="UniProtKB-UniRule"/>
</dbReference>
<dbReference type="GO" id="GO:0005524">
    <property type="term" value="F:ATP binding"/>
    <property type="evidence" value="ECO:0007669"/>
    <property type="project" value="InterPro"/>
</dbReference>
<dbReference type="GO" id="GO:0000400">
    <property type="term" value="F:four-way junction DNA binding"/>
    <property type="evidence" value="ECO:0007669"/>
    <property type="project" value="UniProtKB-UniRule"/>
</dbReference>
<dbReference type="GO" id="GO:0009378">
    <property type="term" value="F:four-way junction helicase activity"/>
    <property type="evidence" value="ECO:0007669"/>
    <property type="project" value="InterPro"/>
</dbReference>
<dbReference type="GO" id="GO:0006310">
    <property type="term" value="P:DNA recombination"/>
    <property type="evidence" value="ECO:0007669"/>
    <property type="project" value="UniProtKB-UniRule"/>
</dbReference>
<dbReference type="GO" id="GO:0006281">
    <property type="term" value="P:DNA repair"/>
    <property type="evidence" value="ECO:0007669"/>
    <property type="project" value="UniProtKB-UniRule"/>
</dbReference>
<dbReference type="CDD" id="cd14332">
    <property type="entry name" value="UBA_RuvA_C"/>
    <property type="match status" value="1"/>
</dbReference>
<dbReference type="Gene3D" id="1.10.150.20">
    <property type="entry name" value="5' to 3' exonuclease, C-terminal subdomain"/>
    <property type="match status" value="1"/>
</dbReference>
<dbReference type="Gene3D" id="1.10.8.10">
    <property type="entry name" value="DNA helicase RuvA subunit, C-terminal domain"/>
    <property type="match status" value="1"/>
</dbReference>
<dbReference type="Gene3D" id="2.40.50.140">
    <property type="entry name" value="Nucleic acid-binding proteins"/>
    <property type="match status" value="1"/>
</dbReference>
<dbReference type="HAMAP" id="MF_00031">
    <property type="entry name" value="DNA_HJ_migration_RuvA"/>
    <property type="match status" value="1"/>
</dbReference>
<dbReference type="InterPro" id="IPR013849">
    <property type="entry name" value="DNA_helicase_Holl-junc_RuvA_I"/>
</dbReference>
<dbReference type="InterPro" id="IPR003583">
    <property type="entry name" value="Hlx-hairpin-Hlx_DNA-bd_motif"/>
</dbReference>
<dbReference type="InterPro" id="IPR012340">
    <property type="entry name" value="NA-bd_OB-fold"/>
</dbReference>
<dbReference type="InterPro" id="IPR000085">
    <property type="entry name" value="RuvA"/>
</dbReference>
<dbReference type="InterPro" id="IPR010994">
    <property type="entry name" value="RuvA_2-like"/>
</dbReference>
<dbReference type="InterPro" id="IPR011114">
    <property type="entry name" value="RuvA_C"/>
</dbReference>
<dbReference type="InterPro" id="IPR036267">
    <property type="entry name" value="RuvA_C_sf"/>
</dbReference>
<dbReference type="NCBIfam" id="TIGR00084">
    <property type="entry name" value="ruvA"/>
    <property type="match status" value="1"/>
</dbReference>
<dbReference type="Pfam" id="PF14520">
    <property type="entry name" value="HHH_5"/>
    <property type="match status" value="1"/>
</dbReference>
<dbReference type="Pfam" id="PF07499">
    <property type="entry name" value="RuvA_C"/>
    <property type="match status" value="1"/>
</dbReference>
<dbReference type="Pfam" id="PF01330">
    <property type="entry name" value="RuvA_N"/>
    <property type="match status" value="1"/>
</dbReference>
<dbReference type="SMART" id="SM00278">
    <property type="entry name" value="HhH1"/>
    <property type="match status" value="2"/>
</dbReference>
<dbReference type="SUPFAM" id="SSF46929">
    <property type="entry name" value="DNA helicase RuvA subunit, C-terminal domain"/>
    <property type="match status" value="1"/>
</dbReference>
<dbReference type="SUPFAM" id="SSF50249">
    <property type="entry name" value="Nucleic acid-binding proteins"/>
    <property type="match status" value="1"/>
</dbReference>
<dbReference type="SUPFAM" id="SSF47781">
    <property type="entry name" value="RuvA domain 2-like"/>
    <property type="match status" value="1"/>
</dbReference>
<protein>
    <recommendedName>
        <fullName evidence="1">Holliday junction branch migration complex subunit RuvA</fullName>
    </recommendedName>
</protein>
<feature type="chain" id="PRO_1000074428" description="Holliday junction branch migration complex subunit RuvA">
    <location>
        <begin position="1"/>
        <end position="193"/>
    </location>
</feature>
<feature type="region of interest" description="Domain I" evidence="1">
    <location>
        <begin position="1"/>
        <end position="64"/>
    </location>
</feature>
<feature type="region of interest" description="Domain II" evidence="1">
    <location>
        <begin position="65"/>
        <end position="139"/>
    </location>
</feature>
<feature type="region of interest" description="Flexible linker" evidence="1">
    <location>
        <begin position="139"/>
        <end position="143"/>
    </location>
</feature>
<feature type="region of interest" description="Domain III" evidence="1">
    <location>
        <begin position="144"/>
        <end position="193"/>
    </location>
</feature>
<reference key="1">
    <citation type="journal article" date="2012" name="Stand. Genomic Sci.">
        <title>Complete genome sequence of Polynucleobacter necessarius subsp. asymbioticus type strain (QLW-P1DMWA-1(T)).</title>
        <authorList>
            <person name="Meincke L."/>
            <person name="Copeland A."/>
            <person name="Lapidus A."/>
            <person name="Lucas S."/>
            <person name="Berry K.W."/>
            <person name="Del Rio T.G."/>
            <person name="Hammon N."/>
            <person name="Dalin E."/>
            <person name="Tice H."/>
            <person name="Pitluck S."/>
            <person name="Richardson P."/>
            <person name="Bruce D."/>
            <person name="Goodwin L."/>
            <person name="Han C."/>
            <person name="Tapia R."/>
            <person name="Detter J.C."/>
            <person name="Schmutz J."/>
            <person name="Brettin T."/>
            <person name="Larimer F."/>
            <person name="Land M."/>
            <person name="Hauser L."/>
            <person name="Kyrpides N.C."/>
            <person name="Ivanova N."/>
            <person name="Goker M."/>
            <person name="Woyke T."/>
            <person name="Wu Q.L."/>
            <person name="Pockl M."/>
            <person name="Hahn M.W."/>
            <person name="Klenk H.P."/>
        </authorList>
    </citation>
    <scope>NUCLEOTIDE SEQUENCE [LARGE SCALE GENOMIC DNA]</scope>
    <source>
        <strain>DSM 18221 / CIP 109841 / QLW-P1DMWA-1</strain>
    </source>
</reference>
<accession>A4T027</accession>
<name>RUVA_POLAQ</name>
<proteinExistence type="inferred from homology"/>
<keyword id="KW-0963">Cytoplasm</keyword>
<keyword id="KW-0227">DNA damage</keyword>
<keyword id="KW-0233">DNA recombination</keyword>
<keyword id="KW-0234">DNA repair</keyword>
<keyword id="KW-0238">DNA-binding</keyword>
<keyword id="KW-1185">Reference proteome</keyword>
<comment type="function">
    <text evidence="1">The RuvA-RuvB-RuvC complex processes Holliday junction (HJ) DNA during genetic recombination and DNA repair, while the RuvA-RuvB complex plays an important role in the rescue of blocked DNA replication forks via replication fork reversal (RFR). RuvA specifically binds to HJ cruciform DNA, conferring on it an open structure. The RuvB hexamer acts as an ATP-dependent pump, pulling dsDNA into and through the RuvAB complex. HJ branch migration allows RuvC to scan DNA until it finds its consensus sequence, where it cleaves and resolves the cruciform DNA.</text>
</comment>
<comment type="subunit">
    <text evidence="1">Homotetramer. Forms an RuvA(8)-RuvB(12)-Holliday junction (HJ) complex. HJ DNA is sandwiched between 2 RuvA tetramers; dsDNA enters through RuvA and exits via RuvB. An RuvB hexamer assembles on each DNA strand where it exits the tetramer. Each RuvB hexamer is contacted by two RuvA subunits (via domain III) on 2 adjacent RuvB subunits; this complex drives branch migration. In the full resolvosome a probable DNA-RuvA(4)-RuvB(12)-RuvC(2) complex forms which resolves the HJ.</text>
</comment>
<comment type="subcellular location">
    <subcellularLocation>
        <location evidence="1">Cytoplasm</location>
    </subcellularLocation>
</comment>
<comment type="domain">
    <text evidence="1">Has three domains with a flexible linker between the domains II and III and assumes an 'L' shape. Domain III is highly mobile and contacts RuvB.</text>
</comment>
<comment type="similarity">
    <text evidence="1">Belongs to the RuvA family.</text>
</comment>
<organism>
    <name type="scientific">Polynucleobacter asymbioticus (strain DSM 18221 / CIP 109841 / QLW-P1DMWA-1)</name>
    <name type="common">Polynucleobacter necessarius subsp. asymbioticus</name>
    <dbReference type="NCBI Taxonomy" id="312153"/>
    <lineage>
        <taxon>Bacteria</taxon>
        <taxon>Pseudomonadati</taxon>
        <taxon>Pseudomonadota</taxon>
        <taxon>Betaproteobacteria</taxon>
        <taxon>Burkholderiales</taxon>
        <taxon>Burkholderiaceae</taxon>
        <taxon>Polynucleobacter</taxon>
    </lineage>
</organism>